<evidence type="ECO:0000255" key="1">
    <source>
        <dbReference type="PROSITE-ProRule" id="PRU00159"/>
    </source>
</evidence>
<evidence type="ECO:0000255" key="2">
    <source>
        <dbReference type="PROSITE-ProRule" id="PRU00226"/>
    </source>
</evidence>
<evidence type="ECO:0000255" key="3">
    <source>
        <dbReference type="PROSITE-ProRule" id="PRU00618"/>
    </source>
</evidence>
<evidence type="ECO:0000255" key="4">
    <source>
        <dbReference type="PROSITE-ProRule" id="PRU10027"/>
    </source>
</evidence>
<evidence type="ECO:0000256" key="5">
    <source>
        <dbReference type="SAM" id="MobiDB-lite"/>
    </source>
</evidence>
<evidence type="ECO:0000305" key="6"/>
<evidence type="ECO:0000312" key="7">
    <source>
        <dbReference type="FlyBase" id="FBgn0287828"/>
    </source>
</evidence>
<organism>
    <name type="scientific">Drosophila melanogaster</name>
    <name type="common">Fruit fly</name>
    <dbReference type="NCBI Taxonomy" id="7227"/>
    <lineage>
        <taxon>Eukaryota</taxon>
        <taxon>Metazoa</taxon>
        <taxon>Ecdysozoa</taxon>
        <taxon>Arthropoda</taxon>
        <taxon>Hexapoda</taxon>
        <taxon>Insecta</taxon>
        <taxon>Pterygota</taxon>
        <taxon>Neoptera</taxon>
        <taxon>Endopterygota</taxon>
        <taxon>Diptera</taxon>
        <taxon>Brachycera</taxon>
        <taxon>Muscomorpha</taxon>
        <taxon>Ephydroidea</taxon>
        <taxon>Drosophilidae</taxon>
        <taxon>Drosophila</taxon>
        <taxon>Sophophora</taxon>
    </lineage>
</organism>
<dbReference type="EC" id="2.7.11.13"/>
<dbReference type="EMBL" id="AE014298">
    <property type="protein sequence ID" value="AAF48160.3"/>
    <property type="molecule type" value="Genomic_DNA"/>
</dbReference>
<dbReference type="EMBL" id="BT021275">
    <property type="protein sequence ID" value="AAX33423.1"/>
    <property type="molecule type" value="mRNA"/>
</dbReference>
<dbReference type="RefSeq" id="NP_001138191.1">
    <property type="nucleotide sequence ID" value="NM_001144719.2"/>
</dbReference>
<dbReference type="RefSeq" id="NP_511171.3">
    <property type="nucleotide sequence ID" value="NM_078616.4"/>
</dbReference>
<dbReference type="SMR" id="P83099"/>
<dbReference type="BioGRID" id="58590">
    <property type="interactions" value="3"/>
</dbReference>
<dbReference type="DIP" id="DIP-18369N"/>
<dbReference type="FunCoup" id="P83099">
    <property type="interactions" value="117"/>
</dbReference>
<dbReference type="IntAct" id="P83099">
    <property type="interactions" value="3"/>
</dbReference>
<dbReference type="STRING" id="7227.FBpp0309085"/>
<dbReference type="PaxDb" id="7227-FBpp0289212"/>
<dbReference type="EnsemblMetazoa" id="FBtr0299936">
    <property type="protein sequence ID" value="FBpp0289213"/>
    <property type="gene ID" value="FBgn0287828"/>
</dbReference>
<dbReference type="EnsemblMetazoa" id="FBtr0299937">
    <property type="protein sequence ID" value="FBpp0289214"/>
    <property type="gene ID" value="FBgn0287828"/>
</dbReference>
<dbReference type="GeneID" id="32191"/>
<dbReference type="KEGG" id="dme:Dmel_CG42349"/>
<dbReference type="AGR" id="FB:FBgn0287828"/>
<dbReference type="CTD" id="32191"/>
<dbReference type="FlyBase" id="FBgn0287828">
    <property type="gene designation" value="Pkcdelta"/>
</dbReference>
<dbReference type="VEuPathDB" id="VectorBase:FBgn0287828"/>
<dbReference type="eggNOG" id="KOG0694">
    <property type="taxonomic scope" value="Eukaryota"/>
</dbReference>
<dbReference type="GeneTree" id="ENSGT00940000169708"/>
<dbReference type="HOGENOM" id="CLU_000288_54_4_1"/>
<dbReference type="InParanoid" id="P83099"/>
<dbReference type="OrthoDB" id="10047816at2759"/>
<dbReference type="PhylomeDB" id="P83099"/>
<dbReference type="Reactome" id="R-DME-111465">
    <property type="pathway name" value="Apoptotic cleavage of cellular proteins"/>
</dbReference>
<dbReference type="Reactome" id="R-DME-111933">
    <property type="pathway name" value="Calmodulin induced events"/>
</dbReference>
<dbReference type="Reactome" id="R-DME-114508">
    <property type="pathway name" value="Effects of PIP2 hydrolysis"/>
</dbReference>
<dbReference type="Reactome" id="R-DME-1250196">
    <property type="pathway name" value="SHC1 events in ERBB2 signaling"/>
</dbReference>
<dbReference type="Reactome" id="R-DME-1489509">
    <property type="pathway name" value="DAG and IP3 signaling"/>
</dbReference>
<dbReference type="Reactome" id="R-DME-202424">
    <property type="pathway name" value="Downstream TCR signaling"/>
</dbReference>
<dbReference type="Reactome" id="R-DME-2029485">
    <property type="pathway name" value="Role of phospholipids in phagocytosis"/>
</dbReference>
<dbReference type="Reactome" id="R-DME-2871837">
    <property type="pathway name" value="FCERI mediated NF-kB activation"/>
</dbReference>
<dbReference type="Reactome" id="R-DME-373752">
    <property type="pathway name" value="Netrin-1 signaling"/>
</dbReference>
<dbReference type="Reactome" id="R-DME-450520">
    <property type="pathway name" value="HuR (ELAVL1) binds and stabilizes mRNA"/>
</dbReference>
<dbReference type="Reactome" id="R-DME-5218921">
    <property type="pathway name" value="VEGFR2 mediated cell proliferation"/>
</dbReference>
<dbReference type="Reactome" id="R-DME-5607764">
    <property type="pathway name" value="CLEC7A (Dectin-1) signaling"/>
</dbReference>
<dbReference type="Reactome" id="R-DME-6798695">
    <property type="pathway name" value="Neutrophil degranulation"/>
</dbReference>
<dbReference type="Reactome" id="R-DME-9648002">
    <property type="pathway name" value="RAS processing"/>
</dbReference>
<dbReference type="BioGRID-ORCS" id="32191">
    <property type="hits" value="0 hits in 3 CRISPR screens"/>
</dbReference>
<dbReference type="ChiTaRS" id="Pkcdelta">
    <property type="organism name" value="fly"/>
</dbReference>
<dbReference type="GenomeRNAi" id="32191"/>
<dbReference type="PRO" id="PR:P83099"/>
<dbReference type="Proteomes" id="UP000000803">
    <property type="component" value="Chromosome X"/>
</dbReference>
<dbReference type="Bgee" id="FBgn0259680">
    <property type="expression patterns" value="Expressed in muscle cell in body wall and 66 other cell types or tissues"/>
</dbReference>
<dbReference type="ExpressionAtlas" id="P83099">
    <property type="expression patterns" value="baseline and differential"/>
</dbReference>
<dbReference type="GO" id="GO:0005886">
    <property type="term" value="C:plasma membrane"/>
    <property type="evidence" value="ECO:0000250"/>
    <property type="project" value="FlyBase"/>
</dbReference>
<dbReference type="GO" id="GO:0005524">
    <property type="term" value="F:ATP binding"/>
    <property type="evidence" value="ECO:0007669"/>
    <property type="project" value="UniProtKB-KW"/>
</dbReference>
<dbReference type="GO" id="GO:0004699">
    <property type="term" value="F:diacylglycerol-dependent, calcium-independent serine/threonine kinase activity"/>
    <property type="evidence" value="ECO:0000250"/>
    <property type="project" value="FlyBase"/>
</dbReference>
<dbReference type="GO" id="GO:0004687">
    <property type="term" value="F:myosin light chain kinase activity"/>
    <property type="evidence" value="ECO:0000315"/>
    <property type="project" value="FlyBase"/>
</dbReference>
<dbReference type="GO" id="GO:0106310">
    <property type="term" value="F:protein serine kinase activity"/>
    <property type="evidence" value="ECO:0007669"/>
    <property type="project" value="RHEA"/>
</dbReference>
<dbReference type="GO" id="GO:0004674">
    <property type="term" value="F:protein serine/threonine kinase activity"/>
    <property type="evidence" value="ECO:0000318"/>
    <property type="project" value="GO_Central"/>
</dbReference>
<dbReference type="GO" id="GO:0008270">
    <property type="term" value="F:zinc ion binding"/>
    <property type="evidence" value="ECO:0007669"/>
    <property type="project" value="UniProtKB-KW"/>
</dbReference>
<dbReference type="GO" id="GO:0060361">
    <property type="term" value="P:flight"/>
    <property type="evidence" value="ECO:0000315"/>
    <property type="project" value="FlyBase"/>
</dbReference>
<dbReference type="GO" id="GO:0035556">
    <property type="term" value="P:intracellular signal transduction"/>
    <property type="evidence" value="ECO:0000318"/>
    <property type="project" value="GO_Central"/>
</dbReference>
<dbReference type="CDD" id="cd20834">
    <property type="entry name" value="C1_nPKC_theta-like_rpt1"/>
    <property type="match status" value="1"/>
</dbReference>
<dbReference type="CDD" id="cd20837">
    <property type="entry name" value="C1_nPKC_theta-like_rpt2"/>
    <property type="match status" value="1"/>
</dbReference>
<dbReference type="CDD" id="cd05592">
    <property type="entry name" value="STKc_nPKC_theta_like"/>
    <property type="match status" value="1"/>
</dbReference>
<dbReference type="FunFam" id="1.10.510.10:FF:000023">
    <property type="entry name" value="Protein kinase C"/>
    <property type="match status" value="1"/>
</dbReference>
<dbReference type="FunFam" id="3.30.60.20:FF:000003">
    <property type="entry name" value="Protein kinase C delta"/>
    <property type="match status" value="1"/>
</dbReference>
<dbReference type="FunFam" id="3.30.60.20:FF:000008">
    <property type="entry name" value="Protein kinase C theta"/>
    <property type="match status" value="1"/>
</dbReference>
<dbReference type="FunFam" id="3.30.200.20:FF:000020">
    <property type="entry name" value="Protein kinase C, alpha"/>
    <property type="match status" value="1"/>
</dbReference>
<dbReference type="Gene3D" id="3.30.60.20">
    <property type="match status" value="2"/>
</dbReference>
<dbReference type="Gene3D" id="3.30.200.20">
    <property type="entry name" value="Phosphorylase Kinase, domain 1"/>
    <property type="match status" value="1"/>
</dbReference>
<dbReference type="Gene3D" id="1.10.510.10">
    <property type="entry name" value="Transferase(Phosphotransferase) domain 1"/>
    <property type="match status" value="1"/>
</dbReference>
<dbReference type="InterPro" id="IPR000961">
    <property type="entry name" value="AGC-kinase_C"/>
</dbReference>
<dbReference type="InterPro" id="IPR046349">
    <property type="entry name" value="C1-like_sf"/>
</dbReference>
<dbReference type="InterPro" id="IPR020454">
    <property type="entry name" value="DAG/PE-bd"/>
</dbReference>
<dbReference type="InterPro" id="IPR011009">
    <property type="entry name" value="Kinase-like_dom_sf"/>
</dbReference>
<dbReference type="InterPro" id="IPR002219">
    <property type="entry name" value="PE/DAG-bd"/>
</dbReference>
<dbReference type="InterPro" id="IPR017892">
    <property type="entry name" value="Pkinase_C"/>
</dbReference>
<dbReference type="InterPro" id="IPR014376">
    <property type="entry name" value="Prot_kin_PKC_delta"/>
</dbReference>
<dbReference type="InterPro" id="IPR000719">
    <property type="entry name" value="Prot_kinase_dom"/>
</dbReference>
<dbReference type="InterPro" id="IPR017441">
    <property type="entry name" value="Protein_kinase_ATP_BS"/>
</dbReference>
<dbReference type="InterPro" id="IPR008271">
    <property type="entry name" value="Ser/Thr_kinase_AS"/>
</dbReference>
<dbReference type="PANTHER" id="PTHR24351">
    <property type="entry name" value="RIBOSOMAL PROTEIN S6 KINASE"/>
    <property type="match status" value="1"/>
</dbReference>
<dbReference type="Pfam" id="PF00130">
    <property type="entry name" value="C1_1"/>
    <property type="match status" value="2"/>
</dbReference>
<dbReference type="Pfam" id="PF00069">
    <property type="entry name" value="Pkinase"/>
    <property type="match status" value="1"/>
</dbReference>
<dbReference type="Pfam" id="PF00433">
    <property type="entry name" value="Pkinase_C"/>
    <property type="match status" value="1"/>
</dbReference>
<dbReference type="PIRSF" id="PIRSF000551">
    <property type="entry name" value="PKC_delta"/>
    <property type="match status" value="1"/>
</dbReference>
<dbReference type="PRINTS" id="PR00008">
    <property type="entry name" value="DAGPEDOMAIN"/>
</dbReference>
<dbReference type="SMART" id="SM00109">
    <property type="entry name" value="C1"/>
    <property type="match status" value="2"/>
</dbReference>
<dbReference type="SMART" id="SM00133">
    <property type="entry name" value="S_TK_X"/>
    <property type="match status" value="1"/>
</dbReference>
<dbReference type="SMART" id="SM00220">
    <property type="entry name" value="S_TKc"/>
    <property type="match status" value="1"/>
</dbReference>
<dbReference type="SUPFAM" id="SSF57889">
    <property type="entry name" value="Cysteine-rich domain"/>
    <property type="match status" value="2"/>
</dbReference>
<dbReference type="SUPFAM" id="SSF56112">
    <property type="entry name" value="Protein kinase-like (PK-like)"/>
    <property type="match status" value="1"/>
</dbReference>
<dbReference type="PROSITE" id="PS51285">
    <property type="entry name" value="AGC_KINASE_CTER"/>
    <property type="match status" value="1"/>
</dbReference>
<dbReference type="PROSITE" id="PS00107">
    <property type="entry name" value="PROTEIN_KINASE_ATP"/>
    <property type="match status" value="1"/>
</dbReference>
<dbReference type="PROSITE" id="PS50011">
    <property type="entry name" value="PROTEIN_KINASE_DOM"/>
    <property type="match status" value="1"/>
</dbReference>
<dbReference type="PROSITE" id="PS00108">
    <property type="entry name" value="PROTEIN_KINASE_ST"/>
    <property type="match status" value="1"/>
</dbReference>
<dbReference type="PROSITE" id="PS00479">
    <property type="entry name" value="ZF_DAG_PE_1"/>
    <property type="match status" value="2"/>
</dbReference>
<dbReference type="PROSITE" id="PS50081">
    <property type="entry name" value="ZF_DAG_PE_2"/>
    <property type="match status" value="2"/>
</dbReference>
<comment type="catalytic activity">
    <reaction>
        <text>L-seryl-[protein] + ATP = O-phospho-L-seryl-[protein] + ADP + H(+)</text>
        <dbReference type="Rhea" id="RHEA:17989"/>
        <dbReference type="Rhea" id="RHEA-COMP:9863"/>
        <dbReference type="Rhea" id="RHEA-COMP:11604"/>
        <dbReference type="ChEBI" id="CHEBI:15378"/>
        <dbReference type="ChEBI" id="CHEBI:29999"/>
        <dbReference type="ChEBI" id="CHEBI:30616"/>
        <dbReference type="ChEBI" id="CHEBI:83421"/>
        <dbReference type="ChEBI" id="CHEBI:456216"/>
        <dbReference type="EC" id="2.7.11.13"/>
    </reaction>
</comment>
<comment type="catalytic activity">
    <reaction>
        <text>L-threonyl-[protein] + ATP = O-phospho-L-threonyl-[protein] + ADP + H(+)</text>
        <dbReference type="Rhea" id="RHEA:46608"/>
        <dbReference type="Rhea" id="RHEA-COMP:11060"/>
        <dbReference type="Rhea" id="RHEA-COMP:11605"/>
        <dbReference type="ChEBI" id="CHEBI:15378"/>
        <dbReference type="ChEBI" id="CHEBI:30013"/>
        <dbReference type="ChEBI" id="CHEBI:30616"/>
        <dbReference type="ChEBI" id="CHEBI:61977"/>
        <dbReference type="ChEBI" id="CHEBI:456216"/>
        <dbReference type="EC" id="2.7.11.13"/>
    </reaction>
</comment>
<comment type="similarity">
    <text evidence="6">Belongs to the protein kinase superfamily. AGC Ser/Thr protein kinase family. PKC subfamily.</text>
</comment>
<proteinExistence type="evidence at transcript level"/>
<name>KPC4_DROME</name>
<reference key="1">
    <citation type="journal article" date="2000" name="Science">
        <title>The genome sequence of Drosophila melanogaster.</title>
        <authorList>
            <person name="Adams M.D."/>
            <person name="Celniker S.E."/>
            <person name="Holt R.A."/>
            <person name="Evans C.A."/>
            <person name="Gocayne J.D."/>
            <person name="Amanatides P.G."/>
            <person name="Scherer S.E."/>
            <person name="Li P.W."/>
            <person name="Hoskins R.A."/>
            <person name="Galle R.F."/>
            <person name="George R.A."/>
            <person name="Lewis S.E."/>
            <person name="Richards S."/>
            <person name="Ashburner M."/>
            <person name="Henderson S.N."/>
            <person name="Sutton G.G."/>
            <person name="Wortman J.R."/>
            <person name="Yandell M.D."/>
            <person name="Zhang Q."/>
            <person name="Chen L.X."/>
            <person name="Brandon R.C."/>
            <person name="Rogers Y.-H.C."/>
            <person name="Blazej R.G."/>
            <person name="Champe M."/>
            <person name="Pfeiffer B.D."/>
            <person name="Wan K.H."/>
            <person name="Doyle C."/>
            <person name="Baxter E.G."/>
            <person name="Helt G."/>
            <person name="Nelson C.R."/>
            <person name="Miklos G.L.G."/>
            <person name="Abril J.F."/>
            <person name="Agbayani A."/>
            <person name="An H.-J."/>
            <person name="Andrews-Pfannkoch C."/>
            <person name="Baldwin D."/>
            <person name="Ballew R.M."/>
            <person name="Basu A."/>
            <person name="Baxendale J."/>
            <person name="Bayraktaroglu L."/>
            <person name="Beasley E.M."/>
            <person name="Beeson K.Y."/>
            <person name="Benos P.V."/>
            <person name="Berman B.P."/>
            <person name="Bhandari D."/>
            <person name="Bolshakov S."/>
            <person name="Borkova D."/>
            <person name="Botchan M.R."/>
            <person name="Bouck J."/>
            <person name="Brokstein P."/>
            <person name="Brottier P."/>
            <person name="Burtis K.C."/>
            <person name="Busam D.A."/>
            <person name="Butler H."/>
            <person name="Cadieu E."/>
            <person name="Center A."/>
            <person name="Chandra I."/>
            <person name="Cherry J.M."/>
            <person name="Cawley S."/>
            <person name="Dahlke C."/>
            <person name="Davenport L.B."/>
            <person name="Davies P."/>
            <person name="de Pablos B."/>
            <person name="Delcher A."/>
            <person name="Deng Z."/>
            <person name="Mays A.D."/>
            <person name="Dew I."/>
            <person name="Dietz S.M."/>
            <person name="Dodson K."/>
            <person name="Doup L.E."/>
            <person name="Downes M."/>
            <person name="Dugan-Rocha S."/>
            <person name="Dunkov B.C."/>
            <person name="Dunn P."/>
            <person name="Durbin K.J."/>
            <person name="Evangelista C.C."/>
            <person name="Ferraz C."/>
            <person name="Ferriera S."/>
            <person name="Fleischmann W."/>
            <person name="Fosler C."/>
            <person name="Gabrielian A.E."/>
            <person name="Garg N.S."/>
            <person name="Gelbart W.M."/>
            <person name="Glasser K."/>
            <person name="Glodek A."/>
            <person name="Gong F."/>
            <person name="Gorrell J.H."/>
            <person name="Gu Z."/>
            <person name="Guan P."/>
            <person name="Harris M."/>
            <person name="Harris N.L."/>
            <person name="Harvey D.A."/>
            <person name="Heiman T.J."/>
            <person name="Hernandez J.R."/>
            <person name="Houck J."/>
            <person name="Hostin D."/>
            <person name="Houston K.A."/>
            <person name="Howland T.J."/>
            <person name="Wei M.-H."/>
            <person name="Ibegwam C."/>
            <person name="Jalali M."/>
            <person name="Kalush F."/>
            <person name="Karpen G.H."/>
            <person name="Ke Z."/>
            <person name="Kennison J.A."/>
            <person name="Ketchum K.A."/>
            <person name="Kimmel B.E."/>
            <person name="Kodira C.D."/>
            <person name="Kraft C.L."/>
            <person name="Kravitz S."/>
            <person name="Kulp D."/>
            <person name="Lai Z."/>
            <person name="Lasko P."/>
            <person name="Lei Y."/>
            <person name="Levitsky A.A."/>
            <person name="Li J.H."/>
            <person name="Li Z."/>
            <person name="Liang Y."/>
            <person name="Lin X."/>
            <person name="Liu X."/>
            <person name="Mattei B."/>
            <person name="McIntosh T.C."/>
            <person name="McLeod M.P."/>
            <person name="McPherson D."/>
            <person name="Merkulov G."/>
            <person name="Milshina N.V."/>
            <person name="Mobarry C."/>
            <person name="Morris J."/>
            <person name="Moshrefi A."/>
            <person name="Mount S.M."/>
            <person name="Moy M."/>
            <person name="Murphy B."/>
            <person name="Murphy L."/>
            <person name="Muzny D.M."/>
            <person name="Nelson D.L."/>
            <person name="Nelson D.R."/>
            <person name="Nelson K.A."/>
            <person name="Nixon K."/>
            <person name="Nusskern D.R."/>
            <person name="Pacleb J.M."/>
            <person name="Palazzolo M."/>
            <person name="Pittman G.S."/>
            <person name="Pan S."/>
            <person name="Pollard J."/>
            <person name="Puri V."/>
            <person name="Reese M.G."/>
            <person name="Reinert K."/>
            <person name="Remington K."/>
            <person name="Saunders R.D.C."/>
            <person name="Scheeler F."/>
            <person name="Shen H."/>
            <person name="Shue B.C."/>
            <person name="Siden-Kiamos I."/>
            <person name="Simpson M."/>
            <person name="Skupski M.P."/>
            <person name="Smith T.J."/>
            <person name="Spier E."/>
            <person name="Spradling A.C."/>
            <person name="Stapleton M."/>
            <person name="Strong R."/>
            <person name="Sun E."/>
            <person name="Svirskas R."/>
            <person name="Tector C."/>
            <person name="Turner R."/>
            <person name="Venter E."/>
            <person name="Wang A.H."/>
            <person name="Wang X."/>
            <person name="Wang Z.-Y."/>
            <person name="Wassarman D.A."/>
            <person name="Weinstock G.M."/>
            <person name="Weissenbach J."/>
            <person name="Williams S.M."/>
            <person name="Woodage T."/>
            <person name="Worley K.C."/>
            <person name="Wu D."/>
            <person name="Yang S."/>
            <person name="Yao Q.A."/>
            <person name="Ye J."/>
            <person name="Yeh R.-F."/>
            <person name="Zaveri J.S."/>
            <person name="Zhan M."/>
            <person name="Zhang G."/>
            <person name="Zhao Q."/>
            <person name="Zheng L."/>
            <person name="Zheng X.H."/>
            <person name="Zhong F.N."/>
            <person name="Zhong W."/>
            <person name="Zhou X."/>
            <person name="Zhu S.C."/>
            <person name="Zhu X."/>
            <person name="Smith H.O."/>
            <person name="Gibbs R.A."/>
            <person name="Myers E.W."/>
            <person name="Rubin G.M."/>
            <person name="Venter J.C."/>
        </authorList>
    </citation>
    <scope>NUCLEOTIDE SEQUENCE [LARGE SCALE GENOMIC DNA]</scope>
    <source>
        <strain>Berkeley</strain>
    </source>
</reference>
<reference key="2">
    <citation type="journal article" date="2002" name="Genome Biol.">
        <title>Annotation of the Drosophila melanogaster euchromatic genome: a systematic review.</title>
        <authorList>
            <person name="Misra S."/>
            <person name="Crosby M.A."/>
            <person name="Mungall C.J."/>
            <person name="Matthews B.B."/>
            <person name="Campbell K.S."/>
            <person name="Hradecky P."/>
            <person name="Huang Y."/>
            <person name="Kaminker J.S."/>
            <person name="Millburn G.H."/>
            <person name="Prochnik S.E."/>
            <person name="Smith C.D."/>
            <person name="Tupy J.L."/>
            <person name="Whitfield E.J."/>
            <person name="Bayraktaroglu L."/>
            <person name="Berman B.P."/>
            <person name="Bettencourt B.R."/>
            <person name="Celniker S.E."/>
            <person name="de Grey A.D.N.J."/>
            <person name="Drysdale R.A."/>
            <person name="Harris N.L."/>
            <person name="Richter J."/>
            <person name="Russo S."/>
            <person name="Schroeder A.J."/>
            <person name="Shu S.Q."/>
            <person name="Stapleton M."/>
            <person name="Yamada C."/>
            <person name="Ashburner M."/>
            <person name="Gelbart W.M."/>
            <person name="Rubin G.M."/>
            <person name="Lewis S.E."/>
        </authorList>
    </citation>
    <scope>GENOME REANNOTATION</scope>
    <source>
        <strain>Berkeley</strain>
    </source>
</reference>
<reference key="3">
    <citation type="submission" date="2005-03" db="EMBL/GenBank/DDBJ databases">
        <authorList>
            <person name="Stapleton M."/>
            <person name="Carlson J.W."/>
            <person name="Chavez C."/>
            <person name="Frise E."/>
            <person name="George R.A."/>
            <person name="Pacleb J.M."/>
            <person name="Park S."/>
            <person name="Wan K.H."/>
            <person name="Yu C."/>
            <person name="Rubin G.M."/>
            <person name="Celniker S.E."/>
        </authorList>
    </citation>
    <scope>NUCLEOTIDE SEQUENCE [LARGE SCALE MRNA]</scope>
    <source>
        <strain>Berkeley</strain>
        <tissue>Embryo</tissue>
    </source>
</reference>
<feature type="chain" id="PRO_0000055733" description="Putative protein kinase C delta type homolog">
    <location>
        <begin position="1"/>
        <end position="671"/>
    </location>
</feature>
<feature type="domain" description="Protein kinase" evidence="1">
    <location>
        <begin position="343"/>
        <end position="601"/>
    </location>
</feature>
<feature type="domain" description="AGC-kinase C-terminal" evidence="3">
    <location>
        <begin position="602"/>
        <end position="671"/>
    </location>
</feature>
<feature type="zinc finger region" description="Phorbol-ester/DAG-type 1" evidence="2">
    <location>
        <begin position="144"/>
        <end position="194"/>
    </location>
</feature>
<feature type="zinc finger region" description="Phorbol-ester/DAG-type 2" evidence="2">
    <location>
        <begin position="216"/>
        <end position="266"/>
    </location>
</feature>
<feature type="region of interest" description="Disordered" evidence="5">
    <location>
        <begin position="1"/>
        <end position="136"/>
    </location>
</feature>
<feature type="compositionally biased region" description="Low complexity" evidence="5">
    <location>
        <begin position="14"/>
        <end position="27"/>
    </location>
</feature>
<feature type="compositionally biased region" description="Basic and acidic residues" evidence="5">
    <location>
        <begin position="57"/>
        <end position="101"/>
    </location>
</feature>
<feature type="compositionally biased region" description="Gly residues" evidence="5">
    <location>
        <begin position="102"/>
        <end position="116"/>
    </location>
</feature>
<feature type="active site" description="Proton acceptor" evidence="1 4">
    <location>
        <position position="467"/>
    </location>
</feature>
<feature type="binding site" evidence="1">
    <location>
        <begin position="349"/>
        <end position="357"/>
    </location>
    <ligand>
        <name>ATP</name>
        <dbReference type="ChEBI" id="CHEBI:30616"/>
    </ligand>
</feature>
<feature type="binding site" evidence="1">
    <location>
        <position position="372"/>
    </location>
    <ligand>
        <name>ATP</name>
        <dbReference type="ChEBI" id="CHEBI:30616"/>
    </ligand>
</feature>
<accession>P83099</accession>
<accession>Q5BIE9</accession>
<accession>Q9VYN2</accession>
<protein>
    <recommendedName>
        <fullName evidence="7">Putative protein kinase C delta type homolog</fullName>
        <ecNumber>2.7.11.13</ecNumber>
    </recommendedName>
</protein>
<sequence>MMFTRAQVRKQKTSNSSSQRPRSSGGSTRHETRYKQSSTSSSGAGSGLSGASGASGARRDQYRDRDHYGKHSFELPRQHSKEEAYHRDRESSAGGVDRGERSGIGGNGGGVTGGGVYVDRRTRPRSITNRRGAIKHQKTHDINGHRFVAKFFRQPTFCAFCNLFLWGFGKQGYQCIICQTVVHKKCHDKLLGKCSGSVFTSASTILLRERFKIDMPHRFKPHTFMSPTFCDHCGSLMGGFFIQGLKCEECDVNCHKKCERLTANLCGVNQKLIVEALNHVKRGAREARDSPSTPPSLNPAYKIEASEEHDETSYTYSQFQKSGRFTAPATVIPRFKNYSVDDFHFLAVLGKGSFGKVLLAELRDTTYYYAIKCLKKDVVLEDDDVDSTLIERKVLALGTKHPYLCHLFCTFQTESHLFFVMEYLNGGDLMFHIQESGRFSEERARFYGAEIISGLKFLHKKGIIYRDLKLDNVLLDYEGHVRIADFGMCKLQIYLDKTADSFCGTPDYMAPEIIKGEKYNQNVDWWSFGVLLYEMLIGQSPFSGCDEDELFWSICNEIPWFPVYISAEATGILKGLLEKDYTKRIGSQYSPAGDIADHIFFRPIDWGLLEKRQIEPPFKPQVKHPLDTQYFDRVFTRERVRLTPIDKEILASMDQKQFHGFTYTNPHITLD</sequence>
<gene>
    <name evidence="7" type="primary">Pkcdelta</name>
    <name evidence="7" type="ORF">CG10524</name>
</gene>
<keyword id="KW-0067">ATP-binding</keyword>
<keyword id="KW-0418">Kinase</keyword>
<keyword id="KW-0479">Metal-binding</keyword>
<keyword id="KW-0547">Nucleotide-binding</keyword>
<keyword id="KW-0597">Phosphoprotein</keyword>
<keyword id="KW-1185">Reference proteome</keyword>
<keyword id="KW-0677">Repeat</keyword>
<keyword id="KW-0723">Serine/threonine-protein kinase</keyword>
<keyword id="KW-0808">Transferase</keyword>
<keyword id="KW-0862">Zinc</keyword>
<keyword id="KW-0863">Zinc-finger</keyword>